<proteinExistence type="inferred from homology"/>
<sequence length="283" mass="30791">MQQFKWINILKGFAMGTSDLVPGVSGGTIALLLGIYNQFIASISGIFSRRFWPSFTFLIPIIIGMLLAMGSLSNLFNYLLSQHHIPTMFFFGGLIIGIVPYLLKISNYKTSFTTKHYMMVIAGIAILIVITLMNNGDKHAGETLTLSTSLIIKYFIAGMCASSAMLLPGISGSFMLLVFGVYGTVMLAISEVVKLNFAGLPILLAVGFGVLAGFIISSKIIQYFLTHHKLMTFALIIGFVVGSLFAVFPGLPTNIVMWFVSLVVFIIGFIVSLTLGRITAENE</sequence>
<accession>Q2FZY8</accession>
<comment type="function">
    <text evidence="2 3">Flippase that catalyzes the transport of undecaprenyl phosphate (UndP) across the cytoplasmic membrane, from the external side to the cytoplasmic side (PubMed:36450357). Is involved in UndP recycling during peptidoglycan synthesis (PubMed:36450357). Necessary for peptidoglycan maintenance (PubMed:36450355).</text>
</comment>
<comment type="activity regulation">
    <text evidence="2">Active in alkaline conditions.</text>
</comment>
<comment type="subcellular location">
    <subcellularLocation>
        <location evidence="6">Cell membrane</location>
        <topology evidence="1">Multi-pass membrane protein</topology>
    </subcellularLocation>
</comment>
<comment type="disruption phenotype">
    <text evidence="2 3">Mutant shows an alkaline growth defect, reduced peptidoglycan quantity, accumulation of the peptidoglycan precursor UDP-N-acetylmuramyl pentapeptide (UDP-M5) and decreased cross-linking (PubMed:36450355). UndP recycling is impaired and mutant shows increased cell surface UndP levels (PubMed:36450355). Deletion of the gene increases sensitivity to the amphomycin derivative MX2401, which binds UndP in the outer leaflet of the cytoplasmic membrane and prevents its recycling (PubMed:36450357). Mutant is far more sensitive to amphomycin than the wild type in alkaline conditions, and is also moderately sensitized to tunicamycin and bacitracin (PubMed:36450355). The double mutant uptA-popT is growth-impaired and exhibits cell size variability, and 10% of the cells have membrane permeability defects, consistent with impaired envelope assembly (PubMed:36450357). The triple mutant lacking uptA, popT and SAOUHSC_00901 is not viable (PubMed:36450357).</text>
</comment>
<comment type="miscellaneous">
    <text evidence="2">Is sufficient for resistance to a surface UndP-targeting antibiotic.</text>
</comment>
<comment type="similarity">
    <text evidence="6">Belongs to the PopT family.</text>
</comment>
<feature type="chain" id="PRO_0000458062" description="Polyprenyl-phosphate transporter">
    <location>
        <begin position="1"/>
        <end position="283"/>
    </location>
</feature>
<feature type="transmembrane region" description="Helical" evidence="1">
    <location>
        <begin position="27"/>
        <end position="47"/>
    </location>
</feature>
<feature type="transmembrane region" description="Helical" evidence="1">
    <location>
        <begin position="51"/>
        <end position="71"/>
    </location>
</feature>
<feature type="transmembrane region" description="Helical" evidence="1">
    <location>
        <begin position="85"/>
        <end position="105"/>
    </location>
</feature>
<feature type="transmembrane region" description="Helical" evidence="1">
    <location>
        <begin position="112"/>
        <end position="132"/>
    </location>
</feature>
<feature type="transmembrane region" description="Helical" evidence="1">
    <location>
        <begin position="148"/>
        <end position="168"/>
    </location>
</feature>
<feature type="transmembrane region" description="Helical" evidence="1">
    <location>
        <begin position="169"/>
        <end position="189"/>
    </location>
</feature>
<feature type="transmembrane region" description="Helical" evidence="1">
    <location>
        <begin position="197"/>
        <end position="217"/>
    </location>
</feature>
<feature type="transmembrane region" description="Helical" evidence="1">
    <location>
        <begin position="230"/>
        <end position="250"/>
    </location>
</feature>
<feature type="transmembrane region" description="Helical" evidence="1">
    <location>
        <begin position="255"/>
        <end position="275"/>
    </location>
</feature>
<organism>
    <name type="scientific">Staphylococcus aureus (strain NCTC 8325 / PS 47)</name>
    <dbReference type="NCBI Taxonomy" id="93061"/>
    <lineage>
        <taxon>Bacteria</taxon>
        <taxon>Bacillati</taxon>
        <taxon>Bacillota</taxon>
        <taxon>Bacilli</taxon>
        <taxon>Bacillales</taxon>
        <taxon>Staphylococcaceae</taxon>
        <taxon>Staphylococcus</taxon>
    </lineage>
</organism>
<name>POPT_STAA8</name>
<evidence type="ECO:0000255" key="1"/>
<evidence type="ECO:0000269" key="2">
    <source>
    </source>
</evidence>
<evidence type="ECO:0000269" key="3">
    <source>
    </source>
</evidence>
<evidence type="ECO:0000303" key="4">
    <source>
    </source>
</evidence>
<evidence type="ECO:0000303" key="5">
    <source>
    </source>
</evidence>
<evidence type="ECO:0000305" key="6"/>
<evidence type="ECO:0000312" key="7">
    <source>
        <dbReference type="EMBL" id="ABD29972.1"/>
    </source>
</evidence>
<dbReference type="EMBL" id="CP000253">
    <property type="protein sequence ID" value="ABD29972.1"/>
    <property type="molecule type" value="Genomic_DNA"/>
</dbReference>
<dbReference type="RefSeq" id="WP_001183858.1">
    <property type="nucleotide sequence ID" value="NZ_LS483365.1"/>
</dbReference>
<dbReference type="RefSeq" id="YP_499400.1">
    <property type="nucleotide sequence ID" value="NC_007795.1"/>
</dbReference>
<dbReference type="STRING" id="93061.SAOUHSC_00846"/>
<dbReference type="PaxDb" id="1280-SAXN108_0908"/>
<dbReference type="GeneID" id="3918958"/>
<dbReference type="KEGG" id="sao:SAOUHSC_00846"/>
<dbReference type="PATRIC" id="fig|93061.5.peg.769"/>
<dbReference type="eggNOG" id="COG2035">
    <property type="taxonomic scope" value="Bacteria"/>
</dbReference>
<dbReference type="HOGENOM" id="CLU_055621_2_1_9"/>
<dbReference type="OrthoDB" id="9793746at2"/>
<dbReference type="Proteomes" id="UP000008816">
    <property type="component" value="Chromosome"/>
</dbReference>
<dbReference type="GO" id="GO:0005886">
    <property type="term" value="C:plasma membrane"/>
    <property type="evidence" value="ECO:0007669"/>
    <property type="project" value="UniProtKB-SubCell"/>
</dbReference>
<dbReference type="GO" id="GO:0071555">
    <property type="term" value="P:cell wall organization"/>
    <property type="evidence" value="ECO:0007669"/>
    <property type="project" value="UniProtKB-KW"/>
</dbReference>
<dbReference type="InterPro" id="IPR007163">
    <property type="entry name" value="VCA0040-like"/>
</dbReference>
<dbReference type="PANTHER" id="PTHR37308">
    <property type="entry name" value="INTEGRAL MEMBRANE PROTEIN"/>
    <property type="match status" value="1"/>
</dbReference>
<dbReference type="PANTHER" id="PTHR37308:SF1">
    <property type="entry name" value="POLYPRENYL-PHOSPHATE TRANSPORTER"/>
    <property type="match status" value="1"/>
</dbReference>
<dbReference type="Pfam" id="PF04018">
    <property type="entry name" value="VCA0040-like"/>
    <property type="match status" value="1"/>
</dbReference>
<protein>
    <recommendedName>
        <fullName evidence="5">Polyprenyl-phosphate transporter</fullName>
    </recommendedName>
    <alternativeName>
        <fullName evidence="4">C55-P translocase</fullName>
    </alternativeName>
    <alternativeName>
        <fullName evidence="4">Undecaprenyl phosphate translocase</fullName>
    </alternativeName>
</protein>
<keyword id="KW-1003">Cell membrane</keyword>
<keyword id="KW-0961">Cell wall biogenesis/degradation</keyword>
<keyword id="KW-0472">Membrane</keyword>
<keyword id="KW-1185">Reference proteome</keyword>
<keyword id="KW-0812">Transmembrane</keyword>
<keyword id="KW-1133">Transmembrane helix</keyword>
<keyword id="KW-0813">Transport</keyword>
<gene>
    <name evidence="5" type="primary">popT</name>
    <name evidence="7" type="ordered locus">SAOUHSC_00846</name>
</gene>
<reference key="1">
    <citation type="book" date="2006" name="Gram positive pathogens, 2nd edition">
        <title>The Staphylococcus aureus NCTC 8325 genome.</title>
        <editorList>
            <person name="Fischetti V."/>
            <person name="Novick R."/>
            <person name="Ferretti J."/>
            <person name="Portnoy D."/>
            <person name="Rood J."/>
        </editorList>
        <authorList>
            <person name="Gillaspy A.F."/>
            <person name="Worrell V."/>
            <person name="Orvis J."/>
            <person name="Roe B.A."/>
            <person name="Dyer D.W."/>
            <person name="Iandolo J.J."/>
        </authorList>
    </citation>
    <scope>NUCLEOTIDE SEQUENCE [LARGE SCALE GENOMIC DNA]</scope>
    <source>
        <strain>NCTC 8325 / PS 47</strain>
    </source>
</reference>
<reference key="2">
    <citation type="journal article" date="2023" name="Nature">
        <title>Undecaprenyl phosphate translocases confer conditional microbial fitness.</title>
        <authorList>
            <person name="Sit B."/>
            <person name="Srisuknimit V."/>
            <person name="Bueno E."/>
            <person name="Zingl F.G."/>
            <person name="Hullahalli K."/>
            <person name="Cava F."/>
            <person name="Waldor M.K."/>
        </authorList>
    </citation>
    <scope>FUNCTION</scope>
    <scope>ACTIVITY REGULATION</scope>
    <scope>DISRUPTION PHENOTYPE</scope>
    <source>
        <strain>NCTC 8325 / PS 47</strain>
    </source>
</reference>
<reference key="3">
    <citation type="journal article" date="2023" name="Nature">
        <title>Two broadly conserved families of polyprenyl-phosphate transporters.</title>
        <authorList>
            <person name="Roney I.J."/>
            <person name="Rudner D.Z."/>
        </authorList>
    </citation>
    <scope>FUNCTION</scope>
    <scope>DISRUPTION PHENOTYPE</scope>
</reference>